<accession>B5YPP4</accession>
<protein>
    <recommendedName>
        <fullName evidence="1">Bifunctional protein FolD</fullName>
    </recommendedName>
    <domain>
        <recommendedName>
            <fullName evidence="1">Methylenetetrahydrofolate dehydrogenase</fullName>
            <ecNumber evidence="1">1.5.1.5</ecNumber>
        </recommendedName>
    </domain>
    <domain>
        <recommendedName>
            <fullName evidence="1">Methenyltetrahydrofolate cyclohydrolase</fullName>
            <ecNumber evidence="1">3.5.4.9</ecNumber>
        </recommendedName>
    </domain>
</protein>
<keyword id="KW-0028">Amino-acid biosynthesis</keyword>
<keyword id="KW-0368">Histidine biosynthesis</keyword>
<keyword id="KW-0378">Hydrolase</keyword>
<keyword id="KW-0486">Methionine biosynthesis</keyword>
<keyword id="KW-0511">Multifunctional enzyme</keyword>
<keyword id="KW-0521">NADP</keyword>
<keyword id="KW-0554">One-carbon metabolism</keyword>
<keyword id="KW-0560">Oxidoreductase</keyword>
<keyword id="KW-0658">Purine biosynthesis</keyword>
<dbReference type="EC" id="1.5.1.5" evidence="1"/>
<dbReference type="EC" id="3.5.4.9" evidence="1"/>
<dbReference type="EMBL" id="CP001164">
    <property type="protein sequence ID" value="ACI37534.1"/>
    <property type="molecule type" value="Genomic_DNA"/>
</dbReference>
<dbReference type="RefSeq" id="WP_000729155.1">
    <property type="nucleotide sequence ID" value="NC_011353.1"/>
</dbReference>
<dbReference type="SMR" id="B5YPP4"/>
<dbReference type="GeneID" id="93776949"/>
<dbReference type="KEGG" id="ecf:ECH74115_0630"/>
<dbReference type="HOGENOM" id="CLU_034045_2_1_6"/>
<dbReference type="UniPathway" id="UPA00193"/>
<dbReference type="GO" id="GO:0005829">
    <property type="term" value="C:cytosol"/>
    <property type="evidence" value="ECO:0007669"/>
    <property type="project" value="TreeGrafter"/>
</dbReference>
<dbReference type="GO" id="GO:0004477">
    <property type="term" value="F:methenyltetrahydrofolate cyclohydrolase activity"/>
    <property type="evidence" value="ECO:0007669"/>
    <property type="project" value="UniProtKB-UniRule"/>
</dbReference>
<dbReference type="GO" id="GO:0004488">
    <property type="term" value="F:methylenetetrahydrofolate dehydrogenase (NADP+) activity"/>
    <property type="evidence" value="ECO:0007669"/>
    <property type="project" value="UniProtKB-UniRule"/>
</dbReference>
<dbReference type="GO" id="GO:0000105">
    <property type="term" value="P:L-histidine biosynthetic process"/>
    <property type="evidence" value="ECO:0007669"/>
    <property type="project" value="UniProtKB-KW"/>
</dbReference>
<dbReference type="GO" id="GO:0009086">
    <property type="term" value="P:methionine biosynthetic process"/>
    <property type="evidence" value="ECO:0007669"/>
    <property type="project" value="UniProtKB-KW"/>
</dbReference>
<dbReference type="GO" id="GO:0006164">
    <property type="term" value="P:purine nucleotide biosynthetic process"/>
    <property type="evidence" value="ECO:0007669"/>
    <property type="project" value="UniProtKB-KW"/>
</dbReference>
<dbReference type="GO" id="GO:0035999">
    <property type="term" value="P:tetrahydrofolate interconversion"/>
    <property type="evidence" value="ECO:0007669"/>
    <property type="project" value="UniProtKB-UniRule"/>
</dbReference>
<dbReference type="CDD" id="cd01080">
    <property type="entry name" value="NAD_bind_m-THF_DH_Cyclohyd"/>
    <property type="match status" value="1"/>
</dbReference>
<dbReference type="FunFam" id="3.40.50.10860:FF:000001">
    <property type="entry name" value="Bifunctional protein FolD"/>
    <property type="match status" value="1"/>
</dbReference>
<dbReference type="FunFam" id="3.40.50.720:FF:000006">
    <property type="entry name" value="Bifunctional protein FolD"/>
    <property type="match status" value="1"/>
</dbReference>
<dbReference type="Gene3D" id="3.40.50.10860">
    <property type="entry name" value="Leucine Dehydrogenase, chain A, domain 1"/>
    <property type="match status" value="1"/>
</dbReference>
<dbReference type="Gene3D" id="3.40.50.720">
    <property type="entry name" value="NAD(P)-binding Rossmann-like Domain"/>
    <property type="match status" value="1"/>
</dbReference>
<dbReference type="HAMAP" id="MF_01576">
    <property type="entry name" value="THF_DHG_CYH"/>
    <property type="match status" value="1"/>
</dbReference>
<dbReference type="InterPro" id="IPR046346">
    <property type="entry name" value="Aminoacid_DH-like_N_sf"/>
</dbReference>
<dbReference type="InterPro" id="IPR036291">
    <property type="entry name" value="NAD(P)-bd_dom_sf"/>
</dbReference>
<dbReference type="InterPro" id="IPR000672">
    <property type="entry name" value="THF_DH/CycHdrlase"/>
</dbReference>
<dbReference type="InterPro" id="IPR020630">
    <property type="entry name" value="THF_DH/CycHdrlase_cat_dom"/>
</dbReference>
<dbReference type="InterPro" id="IPR020867">
    <property type="entry name" value="THF_DH/CycHdrlase_CS"/>
</dbReference>
<dbReference type="InterPro" id="IPR020631">
    <property type="entry name" value="THF_DH/CycHdrlase_NAD-bd_dom"/>
</dbReference>
<dbReference type="NCBIfam" id="NF008058">
    <property type="entry name" value="PRK10792.1"/>
    <property type="match status" value="1"/>
</dbReference>
<dbReference type="NCBIfam" id="NF010783">
    <property type="entry name" value="PRK14186.1"/>
    <property type="match status" value="1"/>
</dbReference>
<dbReference type="PANTHER" id="PTHR48099:SF5">
    <property type="entry name" value="C-1-TETRAHYDROFOLATE SYNTHASE, CYTOPLASMIC"/>
    <property type="match status" value="1"/>
</dbReference>
<dbReference type="PANTHER" id="PTHR48099">
    <property type="entry name" value="C-1-TETRAHYDROFOLATE SYNTHASE, CYTOPLASMIC-RELATED"/>
    <property type="match status" value="1"/>
</dbReference>
<dbReference type="Pfam" id="PF00763">
    <property type="entry name" value="THF_DHG_CYH"/>
    <property type="match status" value="1"/>
</dbReference>
<dbReference type="Pfam" id="PF02882">
    <property type="entry name" value="THF_DHG_CYH_C"/>
    <property type="match status" value="1"/>
</dbReference>
<dbReference type="PRINTS" id="PR00085">
    <property type="entry name" value="THFDHDRGNASE"/>
</dbReference>
<dbReference type="SUPFAM" id="SSF53223">
    <property type="entry name" value="Aminoacid dehydrogenase-like, N-terminal domain"/>
    <property type="match status" value="1"/>
</dbReference>
<dbReference type="SUPFAM" id="SSF51735">
    <property type="entry name" value="NAD(P)-binding Rossmann-fold domains"/>
    <property type="match status" value="1"/>
</dbReference>
<dbReference type="PROSITE" id="PS00766">
    <property type="entry name" value="THF_DHG_CYH_1"/>
    <property type="match status" value="1"/>
</dbReference>
<dbReference type="PROSITE" id="PS00767">
    <property type="entry name" value="THF_DHG_CYH_2"/>
    <property type="match status" value="1"/>
</dbReference>
<name>FOLD_ECO5E</name>
<comment type="function">
    <text evidence="1">Catalyzes the oxidation of 5,10-methylenetetrahydrofolate to 5,10-methenyltetrahydrofolate and then the hydrolysis of 5,10-methenyltetrahydrofolate to 10-formyltetrahydrofolate.</text>
</comment>
<comment type="catalytic activity">
    <reaction evidence="1">
        <text>(6R)-5,10-methylene-5,6,7,8-tetrahydrofolate + NADP(+) = (6R)-5,10-methenyltetrahydrofolate + NADPH</text>
        <dbReference type="Rhea" id="RHEA:22812"/>
        <dbReference type="ChEBI" id="CHEBI:15636"/>
        <dbReference type="ChEBI" id="CHEBI:57455"/>
        <dbReference type="ChEBI" id="CHEBI:57783"/>
        <dbReference type="ChEBI" id="CHEBI:58349"/>
        <dbReference type="EC" id="1.5.1.5"/>
    </reaction>
</comment>
<comment type="catalytic activity">
    <reaction evidence="1">
        <text>(6R)-5,10-methenyltetrahydrofolate + H2O = (6R)-10-formyltetrahydrofolate + H(+)</text>
        <dbReference type="Rhea" id="RHEA:23700"/>
        <dbReference type="ChEBI" id="CHEBI:15377"/>
        <dbReference type="ChEBI" id="CHEBI:15378"/>
        <dbReference type="ChEBI" id="CHEBI:57455"/>
        <dbReference type="ChEBI" id="CHEBI:195366"/>
        <dbReference type="EC" id="3.5.4.9"/>
    </reaction>
</comment>
<comment type="pathway">
    <text evidence="1">One-carbon metabolism; tetrahydrofolate interconversion.</text>
</comment>
<comment type="subunit">
    <text evidence="1">Homodimer.</text>
</comment>
<comment type="similarity">
    <text evidence="1">Belongs to the tetrahydrofolate dehydrogenase/cyclohydrolase family.</text>
</comment>
<proteinExistence type="inferred from homology"/>
<evidence type="ECO:0000255" key="1">
    <source>
        <dbReference type="HAMAP-Rule" id="MF_01576"/>
    </source>
</evidence>
<organism>
    <name type="scientific">Escherichia coli O157:H7 (strain EC4115 / EHEC)</name>
    <dbReference type="NCBI Taxonomy" id="444450"/>
    <lineage>
        <taxon>Bacteria</taxon>
        <taxon>Pseudomonadati</taxon>
        <taxon>Pseudomonadota</taxon>
        <taxon>Gammaproteobacteria</taxon>
        <taxon>Enterobacterales</taxon>
        <taxon>Enterobacteriaceae</taxon>
        <taxon>Escherichia</taxon>
    </lineage>
</organism>
<sequence>MAAKIIDGKTIAQQVRSEVAQKVQARIAAGLRAPGLAVVLVGSNPASQIYVASKRKACEEVGFVSRSYDLPETTSEAELLELIDALNADNTIDGILVQLPLPAGIDNVKVLERIHPDKDVDGFHPYNVGRLCQRAPRLRPCTPRGIVTLLERYNIDTFGLNAVVIGASNIVGRPMSMELLLAGCTTTVTHRFTKNLRHHVENADLLIVAVGKPGFIPGDWIKEGAIVIDVGINRLENGKVVGDVVFEDAAKRASYITPVPGGVGPMTVATLIENTLQACVEYHDPQGE</sequence>
<feature type="chain" id="PRO_1000196774" description="Bifunctional protein FolD">
    <location>
        <begin position="1"/>
        <end position="288"/>
    </location>
</feature>
<feature type="binding site" evidence="1">
    <location>
        <begin position="166"/>
        <end position="168"/>
    </location>
    <ligand>
        <name>NADP(+)</name>
        <dbReference type="ChEBI" id="CHEBI:58349"/>
    </ligand>
</feature>
<feature type="binding site" evidence="1">
    <location>
        <position position="232"/>
    </location>
    <ligand>
        <name>NADP(+)</name>
        <dbReference type="ChEBI" id="CHEBI:58349"/>
    </ligand>
</feature>
<reference key="1">
    <citation type="journal article" date="2011" name="Proc. Natl. Acad. Sci. U.S.A.">
        <title>Genomic anatomy of Escherichia coli O157:H7 outbreaks.</title>
        <authorList>
            <person name="Eppinger M."/>
            <person name="Mammel M.K."/>
            <person name="Leclerc J.E."/>
            <person name="Ravel J."/>
            <person name="Cebula T.A."/>
        </authorList>
    </citation>
    <scope>NUCLEOTIDE SEQUENCE [LARGE SCALE GENOMIC DNA]</scope>
    <source>
        <strain>EC4115 / EHEC</strain>
    </source>
</reference>
<gene>
    <name evidence="1" type="primary">folD</name>
    <name type="ordered locus">ECH74115_0630</name>
</gene>